<proteinExistence type="inferred from homology"/>
<dbReference type="EC" id="2.7.2.15" evidence="1"/>
<dbReference type="EMBL" id="CP000964">
    <property type="protein sequence ID" value="ACI10428.1"/>
    <property type="molecule type" value="Genomic_DNA"/>
</dbReference>
<dbReference type="SMR" id="B5XVZ8"/>
<dbReference type="KEGG" id="kpe:KPK_2016"/>
<dbReference type="HOGENOM" id="CLU_020352_0_1_6"/>
<dbReference type="UniPathway" id="UPA00052">
    <property type="reaction ID" value="UER00510"/>
</dbReference>
<dbReference type="Proteomes" id="UP000001734">
    <property type="component" value="Chromosome"/>
</dbReference>
<dbReference type="GO" id="GO:0005829">
    <property type="term" value="C:cytosol"/>
    <property type="evidence" value="ECO:0007669"/>
    <property type="project" value="TreeGrafter"/>
</dbReference>
<dbReference type="GO" id="GO:0008776">
    <property type="term" value="F:acetate kinase activity"/>
    <property type="evidence" value="ECO:0007669"/>
    <property type="project" value="TreeGrafter"/>
</dbReference>
<dbReference type="GO" id="GO:0005524">
    <property type="term" value="F:ATP binding"/>
    <property type="evidence" value="ECO:0007669"/>
    <property type="project" value="UniProtKB-KW"/>
</dbReference>
<dbReference type="GO" id="GO:0046872">
    <property type="term" value="F:metal ion binding"/>
    <property type="evidence" value="ECO:0007669"/>
    <property type="project" value="UniProtKB-KW"/>
</dbReference>
<dbReference type="GO" id="GO:0008980">
    <property type="term" value="F:propionate kinase activity"/>
    <property type="evidence" value="ECO:0007669"/>
    <property type="project" value="UniProtKB-UniRule"/>
</dbReference>
<dbReference type="GO" id="GO:0006083">
    <property type="term" value="P:acetate metabolic process"/>
    <property type="evidence" value="ECO:0007669"/>
    <property type="project" value="TreeGrafter"/>
</dbReference>
<dbReference type="GO" id="GO:0070689">
    <property type="term" value="P:L-threonine catabolic process to propionate"/>
    <property type="evidence" value="ECO:0007669"/>
    <property type="project" value="UniProtKB-UniRule"/>
</dbReference>
<dbReference type="CDD" id="cd24010">
    <property type="entry name" value="ASKHA_NBD_AcK_PK"/>
    <property type="match status" value="1"/>
</dbReference>
<dbReference type="Gene3D" id="3.30.420.40">
    <property type="match status" value="2"/>
</dbReference>
<dbReference type="HAMAP" id="MF_00020">
    <property type="entry name" value="Acetate_kinase"/>
    <property type="match status" value="1"/>
</dbReference>
<dbReference type="HAMAP" id="MF_01881">
    <property type="entry name" value="Propion_kin_subfam1"/>
    <property type="match status" value="1"/>
</dbReference>
<dbReference type="InterPro" id="IPR004372">
    <property type="entry name" value="Ac/propionate_kinase"/>
</dbReference>
<dbReference type="InterPro" id="IPR000890">
    <property type="entry name" value="Aliphatic_acid_kin_short-chain"/>
</dbReference>
<dbReference type="InterPro" id="IPR023865">
    <property type="entry name" value="Aliphatic_acid_kinase_CS"/>
</dbReference>
<dbReference type="InterPro" id="IPR043129">
    <property type="entry name" value="ATPase_NBD"/>
</dbReference>
<dbReference type="InterPro" id="IPR024917">
    <property type="entry name" value="Propionate_kinase"/>
</dbReference>
<dbReference type="NCBIfam" id="TIGR00016">
    <property type="entry name" value="ackA"/>
    <property type="match status" value="1"/>
</dbReference>
<dbReference type="NCBIfam" id="NF009045">
    <property type="entry name" value="PRK12379.1"/>
    <property type="match status" value="1"/>
</dbReference>
<dbReference type="PANTHER" id="PTHR21060">
    <property type="entry name" value="ACETATE KINASE"/>
    <property type="match status" value="1"/>
</dbReference>
<dbReference type="PANTHER" id="PTHR21060:SF17">
    <property type="entry name" value="PROPIONATE KINASE"/>
    <property type="match status" value="1"/>
</dbReference>
<dbReference type="Pfam" id="PF00871">
    <property type="entry name" value="Acetate_kinase"/>
    <property type="match status" value="1"/>
</dbReference>
<dbReference type="PIRSF" id="PIRSF000722">
    <property type="entry name" value="Acetate_prop_kin"/>
    <property type="match status" value="1"/>
</dbReference>
<dbReference type="PRINTS" id="PR00471">
    <property type="entry name" value="ACETATEKNASE"/>
</dbReference>
<dbReference type="SUPFAM" id="SSF53067">
    <property type="entry name" value="Actin-like ATPase domain"/>
    <property type="match status" value="2"/>
</dbReference>
<dbReference type="PROSITE" id="PS01075">
    <property type="entry name" value="ACETATE_KINASE_1"/>
    <property type="match status" value="1"/>
</dbReference>
<dbReference type="PROSITE" id="PS01076">
    <property type="entry name" value="ACETATE_KINASE_2"/>
    <property type="match status" value="1"/>
</dbReference>
<reference key="1">
    <citation type="journal article" date="2008" name="PLoS Genet.">
        <title>Complete genome sequence of the N2-fixing broad host range endophyte Klebsiella pneumoniae 342 and virulence predictions verified in mice.</title>
        <authorList>
            <person name="Fouts D.E."/>
            <person name="Tyler H.L."/>
            <person name="DeBoy R.T."/>
            <person name="Daugherty S."/>
            <person name="Ren Q."/>
            <person name="Badger J.H."/>
            <person name="Durkin A.S."/>
            <person name="Huot H."/>
            <person name="Shrivastava S."/>
            <person name="Kothari S."/>
            <person name="Dodson R.J."/>
            <person name="Mohamoud Y."/>
            <person name="Khouri H."/>
            <person name="Roesch L.F.W."/>
            <person name="Krogfelt K.A."/>
            <person name="Struve C."/>
            <person name="Triplett E.W."/>
            <person name="Methe B.A."/>
        </authorList>
    </citation>
    <scope>NUCLEOTIDE SEQUENCE [LARGE SCALE GENOMIC DNA]</scope>
    <source>
        <strain>342</strain>
    </source>
</reference>
<gene>
    <name evidence="1" type="primary">tdcD</name>
    <name type="ordered locus">KPK_2016</name>
</gene>
<sequence>MTEFPVVLVINCGSSSIKFSVLDAASCDCLLNGVAEGINAERAFLSLNGGEPVALAPRGYEGALQAIAGALAQRDLIDSVALIGHRVAHGGDLFTESVIISEEVINNIRQVSSLAPLHNYASLSGIASAQRLFPQVMQVAVFDTSFHQTLAPEAFLYGLPWEYYQNLGVRRYGFHGTSHRYVSRRALALLGLPEQESGLVIAHLGNGASICAVRNGRSVDTSMGMTPLEGLMMGTRSGDVDFGAMAWIAGETRQTLSDLERVANTASGLLGISGLSSDLRVLEQAWHEGHARARLAIKTFVHRIARHIAGHAAALQRLDGIIFTGGIGENSVLIRRLVSERLAVFGLEMDVARNQQPNSVGERLISADASRVRCAVIPTNEERMIALDAIRLGRIHTAALA</sequence>
<keyword id="KW-0067">ATP-binding</keyword>
<keyword id="KW-0418">Kinase</keyword>
<keyword id="KW-0460">Magnesium</keyword>
<keyword id="KW-0479">Metal-binding</keyword>
<keyword id="KW-0547">Nucleotide-binding</keyword>
<keyword id="KW-0808">Transferase</keyword>
<name>TDCD_KLEP3</name>
<organism>
    <name type="scientific">Klebsiella pneumoniae (strain 342)</name>
    <dbReference type="NCBI Taxonomy" id="507522"/>
    <lineage>
        <taxon>Bacteria</taxon>
        <taxon>Pseudomonadati</taxon>
        <taxon>Pseudomonadota</taxon>
        <taxon>Gammaproteobacteria</taxon>
        <taxon>Enterobacterales</taxon>
        <taxon>Enterobacteriaceae</taxon>
        <taxon>Klebsiella/Raoultella group</taxon>
        <taxon>Klebsiella</taxon>
        <taxon>Klebsiella pneumoniae complex</taxon>
    </lineage>
</organism>
<accession>B5XVZ8</accession>
<evidence type="ECO:0000255" key="1">
    <source>
        <dbReference type="HAMAP-Rule" id="MF_01881"/>
    </source>
</evidence>
<comment type="function">
    <text evidence="1">Catalyzes the conversion of propionyl phosphate and ADP to propionate and ATP.</text>
</comment>
<comment type="catalytic activity">
    <reaction evidence="1">
        <text>propanoate + ATP = propanoyl phosphate + ADP</text>
        <dbReference type="Rhea" id="RHEA:23148"/>
        <dbReference type="ChEBI" id="CHEBI:17272"/>
        <dbReference type="ChEBI" id="CHEBI:30616"/>
        <dbReference type="ChEBI" id="CHEBI:58933"/>
        <dbReference type="ChEBI" id="CHEBI:456216"/>
        <dbReference type="EC" id="2.7.2.15"/>
    </reaction>
</comment>
<comment type="cofactor">
    <cofactor evidence="1">
        <name>Mg(2+)</name>
        <dbReference type="ChEBI" id="CHEBI:18420"/>
    </cofactor>
</comment>
<comment type="pathway">
    <text evidence="1">Amino-acid degradation; L-threonine degradation via propanoate pathway; propanoate from L-threonine: step 4/4.</text>
</comment>
<comment type="subunit">
    <text evidence="1">Homodimer.</text>
</comment>
<comment type="similarity">
    <text evidence="1">Belongs to the acetokinase family. TdcD subfamily.</text>
</comment>
<feature type="chain" id="PRO_0000398207" description="Propionate kinase">
    <location>
        <begin position="1"/>
        <end position="401"/>
    </location>
</feature>
<feature type="active site" description="Proton donor/acceptor" evidence="1">
    <location>
        <position position="143"/>
    </location>
</feature>
<feature type="binding site" evidence="1">
    <location>
        <position position="11"/>
    </location>
    <ligand>
        <name>ATP</name>
        <dbReference type="ChEBI" id="CHEBI:30616"/>
    </ligand>
</feature>
<feature type="binding site" evidence="1">
    <location>
        <position position="11"/>
    </location>
    <ligand>
        <name>Mg(2+)</name>
        <dbReference type="ChEBI" id="CHEBI:18420"/>
    </ligand>
</feature>
<feature type="binding site" evidence="1">
    <location>
        <position position="18"/>
    </location>
    <ligand>
        <name>ATP</name>
        <dbReference type="ChEBI" id="CHEBI:30616"/>
    </ligand>
</feature>
<feature type="binding site" evidence="1">
    <location>
        <position position="86"/>
    </location>
    <ligand>
        <name>substrate</name>
    </ligand>
</feature>
<feature type="binding site" evidence="1">
    <location>
        <position position="175"/>
    </location>
    <ligand>
        <name>ATP</name>
        <dbReference type="ChEBI" id="CHEBI:30616"/>
    </ligand>
</feature>
<feature type="binding site" evidence="1">
    <location>
        <begin position="203"/>
        <end position="207"/>
    </location>
    <ligand>
        <name>ATP</name>
        <dbReference type="ChEBI" id="CHEBI:30616"/>
    </ligand>
</feature>
<feature type="binding site" evidence="1">
    <location>
        <begin position="278"/>
        <end position="280"/>
    </location>
    <ligand>
        <name>ATP</name>
        <dbReference type="ChEBI" id="CHEBI:30616"/>
    </ligand>
</feature>
<feature type="binding site" evidence="1">
    <location>
        <begin position="326"/>
        <end position="330"/>
    </location>
    <ligand>
        <name>ATP</name>
        <dbReference type="ChEBI" id="CHEBI:30616"/>
    </ligand>
</feature>
<feature type="site" description="Transition state stabilizer" evidence="1">
    <location>
        <position position="175"/>
    </location>
</feature>
<feature type="site" description="Transition state stabilizer" evidence="1">
    <location>
        <position position="236"/>
    </location>
</feature>
<protein>
    <recommendedName>
        <fullName evidence="1">Propionate kinase</fullName>
        <ecNumber evidence="1">2.7.2.15</ecNumber>
    </recommendedName>
</protein>